<sequence length="83" mass="9471">MDLSSLLSQIPQDTLLVLLAYTVLGGLYLVVVPLALYAWMNQRWHRMGKLERLGIYGMVFFFFPGMILFAPFLNFRLSGQGDV</sequence>
<dbReference type="EC" id="7.1.1.-" evidence="1"/>
<dbReference type="EMBL" id="CP000110">
    <property type="protein sequence ID" value="ABB34746.1"/>
    <property type="molecule type" value="Genomic_DNA"/>
</dbReference>
<dbReference type="RefSeq" id="WP_011363970.1">
    <property type="nucleotide sequence ID" value="NC_007516.1"/>
</dbReference>
<dbReference type="SMR" id="Q3AKY6"/>
<dbReference type="STRING" id="110662.Syncc9605_0988"/>
<dbReference type="KEGG" id="syd:Syncc9605_0988"/>
<dbReference type="eggNOG" id="ENOG5032ZM4">
    <property type="taxonomic scope" value="Bacteria"/>
</dbReference>
<dbReference type="HOGENOM" id="CLU_171077_1_0_3"/>
<dbReference type="OrthoDB" id="517549at2"/>
<dbReference type="GO" id="GO:0031676">
    <property type="term" value="C:plasma membrane-derived thylakoid membrane"/>
    <property type="evidence" value="ECO:0007669"/>
    <property type="project" value="UniProtKB-SubCell"/>
</dbReference>
<dbReference type="GO" id="GO:0016655">
    <property type="term" value="F:oxidoreductase activity, acting on NAD(P)H, quinone or similar compound as acceptor"/>
    <property type="evidence" value="ECO:0007669"/>
    <property type="project" value="UniProtKB-UniRule"/>
</dbReference>
<dbReference type="GO" id="GO:0048038">
    <property type="term" value="F:quinone binding"/>
    <property type="evidence" value="ECO:0007669"/>
    <property type="project" value="UniProtKB-KW"/>
</dbReference>
<dbReference type="HAMAP" id="MF_01355">
    <property type="entry name" value="NDH1_NDH1L"/>
    <property type="match status" value="1"/>
</dbReference>
<dbReference type="InterPro" id="IPR019654">
    <property type="entry name" value="NADH-quinone_OxRdatse_su_L"/>
</dbReference>
<dbReference type="PANTHER" id="PTHR36727">
    <property type="entry name" value="NAD(P)H-QUINONE OXIDOREDUCTASE SUBUNIT L, CHLOROPLASTIC"/>
    <property type="match status" value="1"/>
</dbReference>
<dbReference type="PANTHER" id="PTHR36727:SF2">
    <property type="entry name" value="NAD(P)H-QUINONE OXIDOREDUCTASE SUBUNIT L, CHLOROPLASTIC"/>
    <property type="match status" value="1"/>
</dbReference>
<dbReference type="Pfam" id="PF10716">
    <property type="entry name" value="NdhL"/>
    <property type="match status" value="1"/>
</dbReference>
<keyword id="KW-0472">Membrane</keyword>
<keyword id="KW-0520">NAD</keyword>
<keyword id="KW-0521">NADP</keyword>
<keyword id="KW-0618">Plastoquinone</keyword>
<keyword id="KW-0874">Quinone</keyword>
<keyword id="KW-0793">Thylakoid</keyword>
<keyword id="KW-1278">Translocase</keyword>
<keyword id="KW-0812">Transmembrane</keyword>
<keyword id="KW-1133">Transmembrane helix</keyword>
<keyword id="KW-0813">Transport</keyword>
<reference key="1">
    <citation type="submission" date="2005-07" db="EMBL/GenBank/DDBJ databases">
        <title>Complete sequence of Synechococcus sp. CC9605.</title>
        <authorList>
            <consortium name="US DOE Joint Genome Institute"/>
            <person name="Copeland A."/>
            <person name="Lucas S."/>
            <person name="Lapidus A."/>
            <person name="Barry K."/>
            <person name="Detter J.C."/>
            <person name="Glavina T."/>
            <person name="Hammon N."/>
            <person name="Israni S."/>
            <person name="Pitluck S."/>
            <person name="Schmutz J."/>
            <person name="Martinez M."/>
            <person name="Larimer F."/>
            <person name="Land M."/>
            <person name="Kyrpides N."/>
            <person name="Ivanova N."/>
            <person name="Richardson P."/>
        </authorList>
    </citation>
    <scope>NUCLEOTIDE SEQUENCE [LARGE SCALE GENOMIC DNA]</scope>
    <source>
        <strain>CC9605</strain>
    </source>
</reference>
<feature type="chain" id="PRO_0000353688" description="NAD(P)H-quinone oxidoreductase subunit L">
    <location>
        <begin position="1"/>
        <end position="83"/>
    </location>
</feature>
<feature type="transmembrane region" description="Helical" evidence="1">
    <location>
        <begin position="15"/>
        <end position="35"/>
    </location>
</feature>
<feature type="transmembrane region" description="Helical" evidence="1">
    <location>
        <begin position="53"/>
        <end position="73"/>
    </location>
</feature>
<name>NDHL_SYNSC</name>
<gene>
    <name evidence="1" type="primary">ndhL</name>
    <name type="ordered locus">Syncc9605_0988</name>
</gene>
<proteinExistence type="inferred from homology"/>
<organism>
    <name type="scientific">Synechococcus sp. (strain CC9605)</name>
    <dbReference type="NCBI Taxonomy" id="110662"/>
    <lineage>
        <taxon>Bacteria</taxon>
        <taxon>Bacillati</taxon>
        <taxon>Cyanobacteriota</taxon>
        <taxon>Cyanophyceae</taxon>
        <taxon>Synechococcales</taxon>
        <taxon>Synechococcaceae</taxon>
        <taxon>Synechococcus</taxon>
    </lineage>
</organism>
<evidence type="ECO:0000255" key="1">
    <source>
        <dbReference type="HAMAP-Rule" id="MF_01355"/>
    </source>
</evidence>
<accession>Q3AKY6</accession>
<comment type="function">
    <text evidence="1">NDH-1 shuttles electrons from an unknown electron donor, via FMN and iron-sulfur (Fe-S) centers, to quinones in the respiratory and/or the photosynthetic chain. The immediate electron acceptor for the enzyme in this species is believed to be plastoquinone. Couples the redox reaction to proton translocation, and thus conserves the redox energy in a proton gradient. Cyanobacterial NDH-1 also plays a role in inorganic carbon-concentration.</text>
</comment>
<comment type="catalytic activity">
    <reaction evidence="1">
        <text>a plastoquinone + NADH + (n+1) H(+)(in) = a plastoquinol + NAD(+) + n H(+)(out)</text>
        <dbReference type="Rhea" id="RHEA:42608"/>
        <dbReference type="Rhea" id="RHEA-COMP:9561"/>
        <dbReference type="Rhea" id="RHEA-COMP:9562"/>
        <dbReference type="ChEBI" id="CHEBI:15378"/>
        <dbReference type="ChEBI" id="CHEBI:17757"/>
        <dbReference type="ChEBI" id="CHEBI:57540"/>
        <dbReference type="ChEBI" id="CHEBI:57945"/>
        <dbReference type="ChEBI" id="CHEBI:62192"/>
    </reaction>
</comment>
<comment type="catalytic activity">
    <reaction evidence="1">
        <text>a plastoquinone + NADPH + (n+1) H(+)(in) = a plastoquinol + NADP(+) + n H(+)(out)</text>
        <dbReference type="Rhea" id="RHEA:42612"/>
        <dbReference type="Rhea" id="RHEA-COMP:9561"/>
        <dbReference type="Rhea" id="RHEA-COMP:9562"/>
        <dbReference type="ChEBI" id="CHEBI:15378"/>
        <dbReference type="ChEBI" id="CHEBI:17757"/>
        <dbReference type="ChEBI" id="CHEBI:57783"/>
        <dbReference type="ChEBI" id="CHEBI:58349"/>
        <dbReference type="ChEBI" id="CHEBI:62192"/>
    </reaction>
</comment>
<comment type="subunit">
    <text evidence="1">NDH-1 can be composed of about 15 different subunits; different subcomplexes with different compositions have been identified which probably have different functions.</text>
</comment>
<comment type="subcellular location">
    <subcellularLocation>
        <location evidence="1">Cellular thylakoid membrane</location>
        <topology evidence="1">Multi-pass membrane protein</topology>
    </subcellularLocation>
</comment>
<comment type="similarity">
    <text evidence="1">Belongs to the complex I NdhL subunit family.</text>
</comment>
<protein>
    <recommendedName>
        <fullName evidence="1">NAD(P)H-quinone oxidoreductase subunit L</fullName>
        <ecNumber evidence="1">7.1.1.-</ecNumber>
    </recommendedName>
    <alternativeName>
        <fullName evidence="1">NAD(P)H dehydrogenase I subunit L</fullName>
    </alternativeName>
    <alternativeName>
        <fullName>NDH-1 subunit L</fullName>
    </alternativeName>
    <alternativeName>
        <fullName>NDH-L</fullName>
    </alternativeName>
</protein>